<name>MPRA_ECO57</name>
<evidence type="ECO:0000250" key="1"/>
<evidence type="ECO:0000255" key="2">
    <source>
        <dbReference type="PROSITE-ProRule" id="PRU00345"/>
    </source>
</evidence>
<evidence type="ECO:0000305" key="3"/>
<feature type="chain" id="PRO_0000054374" description="Transcriptional repressor MprA">
    <location>
        <begin position="1"/>
        <end position="176"/>
    </location>
</feature>
<feature type="domain" description="HTH marR-type" evidence="2">
    <location>
        <begin position="26"/>
        <end position="160"/>
    </location>
</feature>
<sequence length="176" mass="20563">MDSSFTPIEQMLKFRASRHEDFPYQEILLTRLCMHMQSKLLENRNKMLKAQGINETLFMALITLESQENHSIQPSELSCALGSSRTNATRIADELEKRGWIERRESDNDRRCLHLQLTEKGHEFLREVLPPQHNCLHQLWSALSTTEKDQLEQITRKLLSRLDQMEQDGVVLEAMS</sequence>
<gene>
    <name type="primary">mprA</name>
    <name type="synonym">emrR</name>
    <name type="ordered locus">Z3985</name>
    <name type="ordered locus">ECs3546</name>
</gene>
<organism>
    <name type="scientific">Escherichia coli O157:H7</name>
    <dbReference type="NCBI Taxonomy" id="83334"/>
    <lineage>
        <taxon>Bacteria</taxon>
        <taxon>Pseudomonadati</taxon>
        <taxon>Pseudomonadota</taxon>
        <taxon>Gammaproteobacteria</taxon>
        <taxon>Enterobacterales</taxon>
        <taxon>Enterobacteriaceae</taxon>
        <taxon>Escherichia</taxon>
    </lineage>
</organism>
<protein>
    <recommendedName>
        <fullName>Transcriptional repressor MprA</fullName>
    </recommendedName>
    <alternativeName>
        <fullName>Protein EmrR</fullName>
    </alternativeName>
</protein>
<accession>P0ACS1</accession>
<accession>P24201</accession>
<accession>P77027</accession>
<dbReference type="EMBL" id="AE005174">
    <property type="protein sequence ID" value="AAG57793.1"/>
    <property type="molecule type" value="Genomic_DNA"/>
</dbReference>
<dbReference type="EMBL" id="BA000007">
    <property type="protein sequence ID" value="BAB36969.1"/>
    <property type="molecule type" value="Genomic_DNA"/>
</dbReference>
<dbReference type="PIR" id="B91072">
    <property type="entry name" value="B91072"/>
</dbReference>
<dbReference type="RefSeq" id="NP_311573.1">
    <property type="nucleotide sequence ID" value="NC_002695.1"/>
</dbReference>
<dbReference type="RefSeq" id="WP_000378442.1">
    <property type="nucleotide sequence ID" value="NZ_VOAI01000003.1"/>
</dbReference>
<dbReference type="SMR" id="P0ACS1"/>
<dbReference type="STRING" id="155864.Z3985"/>
<dbReference type="GeneID" id="914738"/>
<dbReference type="GeneID" id="93779327"/>
<dbReference type="KEGG" id="ece:Z3985"/>
<dbReference type="KEGG" id="ecs:ECs_3546"/>
<dbReference type="PATRIC" id="fig|386585.9.peg.3701"/>
<dbReference type="eggNOG" id="COG1846">
    <property type="taxonomic scope" value="Bacteria"/>
</dbReference>
<dbReference type="HOGENOM" id="CLU_083287_17_1_6"/>
<dbReference type="OMA" id="GRWWVLI"/>
<dbReference type="Proteomes" id="UP000000558">
    <property type="component" value="Chromosome"/>
</dbReference>
<dbReference type="Proteomes" id="UP000002519">
    <property type="component" value="Chromosome"/>
</dbReference>
<dbReference type="GO" id="GO:0003677">
    <property type="term" value="F:DNA binding"/>
    <property type="evidence" value="ECO:0007669"/>
    <property type="project" value="UniProtKB-KW"/>
</dbReference>
<dbReference type="GO" id="GO:0003700">
    <property type="term" value="F:DNA-binding transcription factor activity"/>
    <property type="evidence" value="ECO:0007669"/>
    <property type="project" value="InterPro"/>
</dbReference>
<dbReference type="FunFam" id="1.10.10.10:FF:000111">
    <property type="entry name" value="Transcriptional repressor MprA"/>
    <property type="match status" value="1"/>
</dbReference>
<dbReference type="Gene3D" id="1.10.10.10">
    <property type="entry name" value="Winged helix-like DNA-binding domain superfamily/Winged helix DNA-binding domain"/>
    <property type="match status" value="1"/>
</dbReference>
<dbReference type="InterPro" id="IPR000835">
    <property type="entry name" value="HTH_MarR-typ"/>
</dbReference>
<dbReference type="InterPro" id="IPR023187">
    <property type="entry name" value="Tscrpt_reg_MarR-type_CS"/>
</dbReference>
<dbReference type="InterPro" id="IPR036388">
    <property type="entry name" value="WH-like_DNA-bd_sf"/>
</dbReference>
<dbReference type="InterPro" id="IPR036390">
    <property type="entry name" value="WH_DNA-bd_sf"/>
</dbReference>
<dbReference type="NCBIfam" id="NF008122">
    <property type="entry name" value="PRK10870.1"/>
    <property type="match status" value="1"/>
</dbReference>
<dbReference type="PANTHER" id="PTHR42756">
    <property type="entry name" value="TRANSCRIPTIONAL REGULATOR, MARR"/>
    <property type="match status" value="1"/>
</dbReference>
<dbReference type="PANTHER" id="PTHR42756:SF1">
    <property type="entry name" value="TRANSCRIPTIONAL REPRESSOR OF EMRAB OPERON"/>
    <property type="match status" value="1"/>
</dbReference>
<dbReference type="Pfam" id="PF01047">
    <property type="entry name" value="MarR"/>
    <property type="match status" value="1"/>
</dbReference>
<dbReference type="PRINTS" id="PR00598">
    <property type="entry name" value="HTHMARR"/>
</dbReference>
<dbReference type="SMART" id="SM00347">
    <property type="entry name" value="HTH_MARR"/>
    <property type="match status" value="1"/>
</dbReference>
<dbReference type="SUPFAM" id="SSF46785">
    <property type="entry name" value="Winged helix' DNA-binding domain"/>
    <property type="match status" value="1"/>
</dbReference>
<dbReference type="PROSITE" id="PS01117">
    <property type="entry name" value="HTH_MARR_1"/>
    <property type="match status" value="1"/>
</dbReference>
<dbReference type="PROSITE" id="PS50995">
    <property type="entry name" value="HTH_MARR_2"/>
    <property type="match status" value="1"/>
</dbReference>
<proteinExistence type="inferred from homology"/>
<reference key="1">
    <citation type="journal article" date="2001" name="Nature">
        <title>Genome sequence of enterohaemorrhagic Escherichia coli O157:H7.</title>
        <authorList>
            <person name="Perna N.T."/>
            <person name="Plunkett G. III"/>
            <person name="Burland V."/>
            <person name="Mau B."/>
            <person name="Glasner J.D."/>
            <person name="Rose D.J."/>
            <person name="Mayhew G.F."/>
            <person name="Evans P.S."/>
            <person name="Gregor J."/>
            <person name="Kirkpatrick H.A."/>
            <person name="Posfai G."/>
            <person name="Hackett J."/>
            <person name="Klink S."/>
            <person name="Boutin A."/>
            <person name="Shao Y."/>
            <person name="Miller L."/>
            <person name="Grotbeck E.J."/>
            <person name="Davis N.W."/>
            <person name="Lim A."/>
            <person name="Dimalanta E.T."/>
            <person name="Potamousis K."/>
            <person name="Apodaca J."/>
            <person name="Anantharaman T.S."/>
            <person name="Lin J."/>
            <person name="Yen G."/>
            <person name="Schwartz D.C."/>
            <person name="Welch R.A."/>
            <person name="Blattner F.R."/>
        </authorList>
    </citation>
    <scope>NUCLEOTIDE SEQUENCE [LARGE SCALE GENOMIC DNA]</scope>
    <source>
        <strain>O157:H7 / EDL933 / ATCC 700927 / EHEC</strain>
    </source>
</reference>
<reference key="2">
    <citation type="journal article" date="2001" name="DNA Res.">
        <title>Complete genome sequence of enterohemorrhagic Escherichia coli O157:H7 and genomic comparison with a laboratory strain K-12.</title>
        <authorList>
            <person name="Hayashi T."/>
            <person name="Makino K."/>
            <person name="Ohnishi M."/>
            <person name="Kurokawa K."/>
            <person name="Ishii K."/>
            <person name="Yokoyama K."/>
            <person name="Han C.-G."/>
            <person name="Ohtsubo E."/>
            <person name="Nakayama K."/>
            <person name="Murata T."/>
            <person name="Tanaka M."/>
            <person name="Tobe T."/>
            <person name="Iida T."/>
            <person name="Takami H."/>
            <person name="Honda T."/>
            <person name="Sasakawa C."/>
            <person name="Ogasawara N."/>
            <person name="Yasunaga T."/>
            <person name="Kuhara S."/>
            <person name="Shiba T."/>
            <person name="Hattori M."/>
            <person name="Shinagawa H."/>
        </authorList>
    </citation>
    <scope>NUCLEOTIDE SEQUENCE [LARGE SCALE GENOMIC DNA]</scope>
    <source>
        <strain>O157:H7 / Sakai / RIMD 0509952 / EHEC</strain>
    </source>
</reference>
<keyword id="KW-0238">DNA-binding</keyword>
<keyword id="KW-1185">Reference proteome</keyword>
<keyword id="KW-0678">Repressor</keyword>
<keyword id="KW-0804">Transcription</keyword>
<keyword id="KW-0805">Transcription regulation</keyword>
<comment type="function">
    <text evidence="1">Negative regulator of the multidrug operon emrAB.</text>
</comment>
<comment type="induction">
    <text evidence="3">Autoregulated.</text>
</comment>